<name>CRMP2_TETTS</name>
<protein>
    <recommendedName>
        <fullName evidence="5">Cysteine repeat modular protein 2</fullName>
        <shortName evidence="5">TtCRMP2</shortName>
    </recommendedName>
    <alternativeName>
        <fullName evidence="7">EGF-like domain protein</fullName>
    </alternativeName>
</protein>
<evidence type="ECO:0000255" key="1"/>
<evidence type="ECO:0000255" key="2">
    <source>
        <dbReference type="PROSITE-ProRule" id="PRU00076"/>
    </source>
</evidence>
<evidence type="ECO:0000255" key="3">
    <source>
        <dbReference type="PROSITE-ProRule" id="PRU00498"/>
    </source>
</evidence>
<evidence type="ECO:0000269" key="4">
    <source>
    </source>
</evidence>
<evidence type="ECO:0000303" key="5">
    <source>
    </source>
</evidence>
<evidence type="ECO:0000305" key="6"/>
<evidence type="ECO:0000312" key="7">
    <source>
        <dbReference type="EMBL" id="EAR84716.2"/>
    </source>
</evidence>
<evidence type="ECO:0000312" key="8">
    <source>
        <dbReference type="Proteomes" id="UP000009168"/>
    </source>
</evidence>
<organism evidence="8">
    <name type="scientific">Tetrahymena thermophila (strain SB210)</name>
    <dbReference type="NCBI Taxonomy" id="312017"/>
    <lineage>
        <taxon>Eukaryota</taxon>
        <taxon>Sar</taxon>
        <taxon>Alveolata</taxon>
        <taxon>Ciliophora</taxon>
        <taxon>Intramacronucleata</taxon>
        <taxon>Oligohymenophorea</taxon>
        <taxon>Hymenostomatida</taxon>
        <taxon>Tetrahymenina</taxon>
        <taxon>Tetrahymenidae</taxon>
        <taxon>Tetrahymena</taxon>
    </lineage>
</organism>
<sequence>MKFKKELINILALIFVLKKNIFAQSICPTGYQMTQGSCTAIQCPNGQYYDSNLGLCANCDQACSACNYYPTYCTQCQNGFYLYQNQCLTQCPQAQTYVSCSGSSCICQACDSSCTQCFGNKNTQCLACSVGFYYNQINSSCLKQCEDGYTQQIVNIGASQQLLCIPCDNNCRTCSQTNAQQCLTCKDNMYLNTATNQCVSTCPQLQYKINGICKICPTGCQTCYNTNPSNPSTVESCLSCVSGYFLDIENQLCVKNCVSGYVVDAATQRCLPCNATCKNCSDQTNQGCLQCQNGYSLTSGSPSSCQNNCPNGNYQNSSLCLSCNTACSECFGADNQQCTACKTGYYLYKTQCLVICPVGFYTFARQYADPLKQPICDYCPNEMEQCEQDKSNFDLIKPILCKRGYYLYNGTCVKTCPDQTYYQDEATRSCLPCVFPCQTCLSASVCLTCATYTPNGQVQGQTYIFAQITYNGPQGTVFQQNCVPACPKGFYQNSKNNSCQVCNQQCQTCQGPAQTDCITCQIYDSNNMLFKYNNQCYYTCPSSQNNPMYGDKTTQACLPCSQECSSCFNGNNKSCYSCMNGYFLEYLKPECKSFCASDGTYMNSSTNQCSLCGFGCSSCTNGTFNSCISCLNGYYLQQNYNVCYPCPQQCASCTDMNTCQSCNQGYFLYSQTNSCVQQCPLIGFYVDTTQQACIPCDASCLECYGGANNQCISCPKGSYLKTDGTCQQCSQCSSNNECLGPNITDCLNQPICKPGQYLYDGQCLTCFPYCSTCSGTTYDSCISCQTTTDYTLLFDVCKKKVSQTDTQCDIGFYYDSVNKQCYSCHQNCIQCFGKSSSQCTKCSSGYLLHLDITTCSSTCLDGYYQQDPSIPQCSPCLYNCINGCSSGYQFLLGLCFTQCPFGTTAQKENCSFNSKPSIQFAQNLGNSVNNNSQTISLQLLVYSKNLFSIKWRLFTGNTDISNGPIQSYIQNRFDYIVFPPKSLQSNTQYTIQASILDLANNCQNENDCMVQQTFQTMNAITKGNFNIEINSAYLQLTLIISGWLFNSVPDNISFDLYVKLTGNDYFFFDKGQNYQDGRFTYLIPNLSYDLQDNKAQFFLVIYNDFDVQIQQLLIALNLNLQQTTISIDEFLDSVYSKITTLQQIQSLSYQFYSQMQNLMSSQTTSQTIFNRHLFYQVYSSLKGVQIPCDSNINCSGNGKCLWSQDNYNEILCICNINYAGRYCEFQSYQLDIARQHLIALTDLISNIPLNKSSDLFFTIEVLLELTYFYSIFDEFTLNTLINVYFQVFNQLQRVQSNISDEKILFKISKLTSQLINLINEDQTLSYNDQQSLLMKTMNDFDSQINLYLQNFAKSFDDLKSQEQVQTSFQTDISNINLNLIYQNDLLDAFMSNNGASDGQQQTPIVFYGDQISYTFDITQFSPKSSLSTAVIKWNSNPFLSQSQYQAPFISCITELVIYSQQTEIQISTVSQIVEIAIPKILPTPILSVIRPFYQPYTCIYFDSVSQVYKQDGVQYLRENSTHVICGSEQISGNYGVIVNQEYIDPNLSLTVIWNATQQIYANDQQFINFINQLINSNNNNGTNENPQVSQSSFNPNLSLLYALLIYIIFITIFIVISIIRDRKDQETYIKESDSYWLVHPIYSLIFGPYSSFFPRLQRSINYAQLIINLFLYNAIFVLVYSLPSEQELQQNVGKRQIISIQISSTSVACSIVTYYLTICMVNLFKMKWYIKQKWLDFKQDKITTEIVEQVTKSLKIFHLMNYGLVFMLQAGMGIPIIILILSFNSQQNQFFFTSVFASFVIDNILDIIILISFCFIKIFSQSEKSKIILLFTLRGFYYPVYEFLDIEDKIKEYQQKGEVLPAEEANNQSDDEDIFEINDHMNTPKRIFKKNEEKIDKAQEEIQLNEFVNNLKTNQ</sequence>
<reference evidence="8" key="1">
    <citation type="journal article" date="2006" name="PLoS Biol.">
        <title>Macronuclear genome sequence of the ciliate Tetrahymena thermophila, a model eukaryote.</title>
        <authorList>
            <person name="Eisen J.A."/>
            <person name="Coyne R.S."/>
            <person name="Wu M."/>
            <person name="Wu D."/>
            <person name="Thiagarajan M."/>
            <person name="Wortman J.R."/>
            <person name="Badger J.H."/>
            <person name="Ren Q."/>
            <person name="Amedeo P."/>
            <person name="Jones K.M."/>
            <person name="Tallon L.J."/>
            <person name="Delcher A.L."/>
            <person name="Salzberg S.L."/>
            <person name="Silva J.C."/>
            <person name="Haas B.J."/>
            <person name="Majoros W.H."/>
            <person name="Farzad M."/>
            <person name="Carlton J.M."/>
            <person name="Smith R.K. Jr."/>
            <person name="Garg J."/>
            <person name="Pearlman R.E."/>
            <person name="Karrer K.M."/>
            <person name="Sun L."/>
            <person name="Manning G."/>
            <person name="Elde N.C."/>
            <person name="Turkewitz A.P."/>
            <person name="Asai D.J."/>
            <person name="Wilkes D.E."/>
            <person name="Wang Y."/>
            <person name="Cai H."/>
            <person name="Collins K."/>
            <person name="Stewart B.A."/>
            <person name="Lee S.R."/>
            <person name="Wilamowska K."/>
            <person name="Weinberg Z."/>
            <person name="Ruzzo W.L."/>
            <person name="Wloga D."/>
            <person name="Gaertig J."/>
            <person name="Frankel J."/>
            <person name="Tsao C.-C."/>
            <person name="Gorovsky M.A."/>
            <person name="Keeling P.J."/>
            <person name="Waller R.F."/>
            <person name="Patron N.J."/>
            <person name="Cherry J.M."/>
            <person name="Stover N.A."/>
            <person name="Krieger C.J."/>
            <person name="del Toro C."/>
            <person name="Ryder H.F."/>
            <person name="Williamson S.C."/>
            <person name="Barbeau R.A."/>
            <person name="Hamilton E.P."/>
            <person name="Orias E."/>
        </authorList>
    </citation>
    <scope>NUCLEOTIDE SEQUENCE [LARGE SCALE GENOMIC DNA]</scope>
    <source>
        <strain evidence="8">SB210</strain>
    </source>
</reference>
<reference evidence="6" key="2">
    <citation type="journal article" date="2022" name="EMBO J.">
        <title>An apical membrane complex for triggering rhoptry exocytosis and invasion in Toxoplasma.</title>
        <authorList>
            <person name="Sparvoli D."/>
            <person name="Delabre J."/>
            <person name="Penarete-Vargas D.M."/>
            <person name="Kumar Mageswaran S."/>
            <person name="Tsypin L.M."/>
            <person name="Heckendorn J."/>
            <person name="Theveny L."/>
            <person name="Maynadier M."/>
            <person name="Mendonca Cova M."/>
            <person name="Berry-Sterkers L."/>
            <person name="Guerin A."/>
            <person name="Dubremetz J.F."/>
            <person name="Urbach S."/>
            <person name="Striepen B."/>
            <person name="Turkewitz A.P."/>
            <person name="Chang Y.W."/>
            <person name="Lebrun M."/>
        </authorList>
    </citation>
    <scope>FUNCTION</scope>
    <scope>DISRUPTION PHENOTYPE</scope>
</reference>
<proteinExistence type="inferred from homology"/>
<accession>Q22HI5</accession>
<gene>
    <name evidence="7" type="ORF">TTHERM_00637180</name>
</gene>
<comment type="function">
    <text evidence="4">Required for mucocyst secretion.</text>
</comment>
<comment type="subcellular location">
    <subcellularLocation>
        <location evidence="1">Membrane</location>
        <topology evidence="1">Multi-pass membrane protein</topology>
    </subcellularLocation>
</comment>
<comment type="disruption phenotype">
    <text evidence="4">Gene knockout results in impaired in mucocyst discharge (PubMed:36245278). No significant effect on the mucocyst biogenesis (PubMed:36245278).</text>
</comment>
<keyword id="KW-1015">Disulfide bond</keyword>
<keyword id="KW-0245">EGF-like domain</keyword>
<keyword id="KW-0268">Exocytosis</keyword>
<keyword id="KW-0325">Glycoprotein</keyword>
<keyword id="KW-0472">Membrane</keyword>
<keyword id="KW-1185">Reference proteome</keyword>
<keyword id="KW-0677">Repeat</keyword>
<keyword id="KW-0732">Signal</keyword>
<keyword id="KW-0812">Transmembrane</keyword>
<keyword id="KW-1133">Transmembrane helix</keyword>
<dbReference type="EMBL" id="GG662588">
    <property type="protein sequence ID" value="EAR84716.2"/>
    <property type="molecule type" value="Genomic_DNA"/>
</dbReference>
<dbReference type="RefSeq" id="XP_001032379.2">
    <property type="nucleotide sequence ID" value="XM_001032379.2"/>
</dbReference>
<dbReference type="EnsemblProtists" id="EAR84716">
    <property type="protein sequence ID" value="EAR84716"/>
    <property type="gene ID" value="TTHERM_00637180"/>
</dbReference>
<dbReference type="GeneID" id="7846573"/>
<dbReference type="KEGG" id="tet:TTHERM_00637180"/>
<dbReference type="eggNOG" id="KOG3525">
    <property type="taxonomic scope" value="Eukaryota"/>
</dbReference>
<dbReference type="HOGENOM" id="CLU_236841_0_0_1"/>
<dbReference type="InParanoid" id="Q22HI5"/>
<dbReference type="OrthoDB" id="300641at2759"/>
<dbReference type="Proteomes" id="UP000009168">
    <property type="component" value="Unassembled WGS sequence"/>
</dbReference>
<dbReference type="GO" id="GO:0016020">
    <property type="term" value="C:membrane"/>
    <property type="evidence" value="ECO:0007669"/>
    <property type="project" value="UniProtKB-SubCell"/>
</dbReference>
<dbReference type="GO" id="GO:0006887">
    <property type="term" value="P:exocytosis"/>
    <property type="evidence" value="ECO:0007669"/>
    <property type="project" value="UniProtKB-KW"/>
</dbReference>
<dbReference type="CDD" id="cd00064">
    <property type="entry name" value="FU"/>
    <property type="match status" value="7"/>
</dbReference>
<dbReference type="Gene3D" id="2.10.220.10">
    <property type="entry name" value="Hormone Receptor, Insulin-like Growth Factor Receptor 1, Chain A, domain 2"/>
    <property type="match status" value="9"/>
</dbReference>
<dbReference type="InterPro" id="IPR000742">
    <property type="entry name" value="EGF-like_dom"/>
</dbReference>
<dbReference type="InterPro" id="IPR006212">
    <property type="entry name" value="Furin_repeat"/>
</dbReference>
<dbReference type="InterPro" id="IPR009030">
    <property type="entry name" value="Growth_fac_rcpt_cys_sf"/>
</dbReference>
<dbReference type="PANTHER" id="PTHR15332">
    <property type="entry name" value="PROPROTEIN CONVERTASE SUBTILISIN_KEXIN TYPE 5-LIKE"/>
    <property type="match status" value="1"/>
</dbReference>
<dbReference type="PANTHER" id="PTHR15332:SF175">
    <property type="entry name" value="PROPROTEIN CONVERTASE SUBTILISIN_KEXIN TYPE 5-LIKE"/>
    <property type="match status" value="1"/>
</dbReference>
<dbReference type="SMART" id="SM00181">
    <property type="entry name" value="EGF"/>
    <property type="match status" value="12"/>
</dbReference>
<dbReference type="SMART" id="SM01411">
    <property type="entry name" value="Ephrin_rec_like"/>
    <property type="match status" value="7"/>
</dbReference>
<dbReference type="SMART" id="SM00261">
    <property type="entry name" value="FU"/>
    <property type="match status" value="15"/>
</dbReference>
<dbReference type="SUPFAM" id="SSF57184">
    <property type="entry name" value="Growth factor receptor domain"/>
    <property type="match status" value="6"/>
</dbReference>
<dbReference type="PROSITE" id="PS00022">
    <property type="entry name" value="EGF_1"/>
    <property type="match status" value="1"/>
</dbReference>
<dbReference type="PROSITE" id="PS50026">
    <property type="entry name" value="EGF_3"/>
    <property type="match status" value="1"/>
</dbReference>
<feature type="signal peptide" evidence="1">
    <location>
        <begin position="1"/>
        <end position="23"/>
    </location>
</feature>
<feature type="chain" id="PRO_5004200990" description="Cysteine repeat modular protein 2" evidence="1">
    <location>
        <begin position="24"/>
        <end position="1915"/>
    </location>
</feature>
<feature type="transmembrane region" description="Helical" evidence="1">
    <location>
        <begin position="1599"/>
        <end position="1619"/>
    </location>
</feature>
<feature type="transmembrane region" description="Helical" evidence="1">
    <location>
        <begin position="1662"/>
        <end position="1682"/>
    </location>
</feature>
<feature type="transmembrane region" description="Helical" evidence="1">
    <location>
        <begin position="1704"/>
        <end position="1724"/>
    </location>
</feature>
<feature type="transmembrane region" description="Helical" evidence="1">
    <location>
        <begin position="1763"/>
        <end position="1783"/>
    </location>
</feature>
<feature type="transmembrane region" description="Helical" evidence="1">
    <location>
        <begin position="1796"/>
        <end position="1816"/>
    </location>
</feature>
<feature type="repeat" description="FU 1" evidence="1">
    <location>
        <begin position="53"/>
        <end position="98"/>
    </location>
</feature>
<feature type="repeat" description="FU 2" evidence="1">
    <location>
        <begin position="104"/>
        <end position="151"/>
    </location>
</feature>
<feature type="repeat" description="FU 3" evidence="1">
    <location>
        <begin position="161"/>
        <end position="208"/>
    </location>
</feature>
<feature type="repeat" description="FU 4" evidence="1">
    <location>
        <begin position="210"/>
        <end position="263"/>
    </location>
</feature>
<feature type="repeat" description="FU 5" evidence="1">
    <location>
        <begin position="267"/>
        <end position="315"/>
    </location>
</feature>
<feature type="repeat" description="FU 6" evidence="1">
    <location>
        <begin position="317"/>
        <end position="362"/>
    </location>
</feature>
<feature type="repeat" description="FU 7" evidence="1">
    <location>
        <begin position="373"/>
        <end position="422"/>
    </location>
</feature>
<feature type="repeat" description="FU 8" evidence="1">
    <location>
        <begin position="427"/>
        <end position="492"/>
    </location>
</feature>
<feature type="repeat" description="FU 9" evidence="1">
    <location>
        <begin position="496"/>
        <end position="546"/>
    </location>
</feature>
<feature type="repeat" description="FU 10" evidence="1">
    <location>
        <begin position="554"/>
        <end position="602"/>
    </location>
</feature>
<feature type="repeat" description="FU 11" evidence="1">
    <location>
        <begin position="606"/>
        <end position="639"/>
    </location>
</feature>
<feature type="repeat" description="FU 12" evidence="1">
    <location>
        <begin position="640"/>
        <end position="686"/>
    </location>
</feature>
<feature type="repeat" description="FU 13" evidence="1">
    <location>
        <begin position="690"/>
        <end position="739"/>
    </location>
</feature>
<feature type="repeat" description="FU 14" evidence="1">
    <location>
        <begin position="760"/>
        <end position="814"/>
    </location>
</feature>
<feature type="repeat" description="FU 15" evidence="1">
    <location>
        <begin position="818"/>
        <end position="865"/>
    </location>
</feature>
<feature type="domain" description="EGF-like" evidence="2">
    <location>
        <begin position="1184"/>
        <end position="1224"/>
    </location>
</feature>
<feature type="glycosylation site" description="N-linked (GlcNAc...) asparagine" evidence="3">
    <location>
        <position position="138"/>
    </location>
</feature>
<feature type="glycosylation site" description="N-linked (GlcNAc...) asparagine" evidence="3">
    <location>
        <position position="274"/>
    </location>
</feature>
<feature type="glycosylation site" description="N-linked (GlcNAc...) asparagine" evidence="3">
    <location>
        <position position="279"/>
    </location>
</feature>
<feature type="glycosylation site" description="N-linked (GlcNAc...) asparagine" evidence="3">
    <location>
        <position position="316"/>
    </location>
</feature>
<feature type="glycosylation site" description="N-linked (GlcNAc...) asparagine" evidence="3">
    <location>
        <position position="409"/>
    </location>
</feature>
<feature type="glycosylation site" description="N-linked (GlcNAc...) asparagine" evidence="3">
    <location>
        <position position="496"/>
    </location>
</feature>
<feature type="glycosylation site" description="N-linked (GlcNAc...) asparagine" evidence="3">
    <location>
        <position position="572"/>
    </location>
</feature>
<feature type="glycosylation site" description="N-linked (GlcNAc...) asparagine" evidence="3">
    <location>
        <position position="603"/>
    </location>
</feature>
<feature type="glycosylation site" description="N-linked (GlcNAc...) asparagine" evidence="3">
    <location>
        <position position="621"/>
    </location>
</feature>
<feature type="glycosylation site" description="N-linked (GlcNAc...) asparagine" evidence="3">
    <location>
        <position position="742"/>
    </location>
</feature>
<feature type="glycosylation site" description="N-linked (GlcNAc...) asparagine" evidence="3">
    <location>
        <position position="909"/>
    </location>
</feature>
<feature type="glycosylation site" description="N-linked (GlcNAc...) asparagine" evidence="3">
    <location>
        <position position="930"/>
    </location>
</feature>
<feature type="glycosylation site" description="N-linked (GlcNAc...) asparagine" evidence="3">
    <location>
        <position position="1051"/>
    </location>
</feature>
<feature type="glycosylation site" description="N-linked (GlcNAc...) asparagine" evidence="3">
    <location>
        <position position="1085"/>
    </location>
</feature>
<feature type="glycosylation site" description="N-linked (GlcNAc...) asparagine" evidence="3">
    <location>
        <position position="1193"/>
    </location>
</feature>
<feature type="glycosylation site" description="N-linked (GlcNAc...) asparagine" evidence="3">
    <location>
        <position position="1250"/>
    </location>
</feature>
<feature type="glycosylation site" description="N-linked (GlcNAc...) asparagine" evidence="3">
    <location>
        <position position="1297"/>
    </location>
</feature>
<feature type="glycosylation site" description="N-linked (GlcNAc...) asparagine" evidence="3">
    <location>
        <position position="1519"/>
    </location>
</feature>
<feature type="glycosylation site" description="N-linked (GlcNAc...) asparagine" evidence="3">
    <location>
        <position position="1546"/>
    </location>
</feature>
<feature type="glycosylation site" description="N-linked (GlcNAc...) asparagine" evidence="3">
    <location>
        <position position="1554"/>
    </location>
</feature>
<feature type="glycosylation site" description="N-linked (GlcNAc...) asparagine" evidence="3">
    <location>
        <position position="1580"/>
    </location>
</feature>
<feature type="glycosylation site" description="N-linked (GlcNAc...) asparagine" evidence="3">
    <location>
        <position position="1596"/>
    </location>
</feature>
<feature type="glycosylation site" description="N-linked (GlcNAc...) asparagine" evidence="3">
    <location>
        <position position="1867"/>
    </location>
</feature>
<feature type="disulfide bond" evidence="2">
    <location>
        <begin position="1188"/>
        <end position="1200"/>
    </location>
</feature>
<feature type="disulfide bond" evidence="2">
    <location>
        <begin position="1194"/>
        <end position="1212"/>
    </location>
</feature>
<feature type="disulfide bond" evidence="2">
    <location>
        <begin position="1214"/>
        <end position="1223"/>
    </location>
</feature>